<feature type="chain" id="PRO_0000051437" description="WD repeat domain phosphoinositide-interacting protein 1">
    <location>
        <begin position="1"/>
        <end position="446"/>
    </location>
</feature>
<feature type="repeat" description="WD 1">
    <location>
        <begin position="3"/>
        <end position="42"/>
    </location>
</feature>
<feature type="repeat" description="WD 2">
    <location>
        <begin position="47"/>
        <end position="88"/>
    </location>
</feature>
<feature type="repeat" description="WD 3">
    <location>
        <begin position="92"/>
        <end position="126"/>
    </location>
</feature>
<feature type="repeat" description="WD 4">
    <location>
        <begin position="131"/>
        <end position="173"/>
    </location>
</feature>
<feature type="repeat" description="WD 5">
    <location>
        <begin position="177"/>
        <end position="216"/>
    </location>
</feature>
<feature type="repeat" description="WD 6">
    <location>
        <begin position="222"/>
        <end position="261"/>
    </location>
</feature>
<feature type="repeat" description="WD 7">
    <location>
        <begin position="304"/>
        <end position="343"/>
    </location>
</feature>
<feature type="region of interest" description="Disordered" evidence="2">
    <location>
        <begin position="386"/>
        <end position="406"/>
    </location>
</feature>
<feature type="short sequence motif" description="Nuclear receptor interaction" evidence="5">
    <location>
        <begin position="131"/>
        <end position="136"/>
    </location>
</feature>
<feature type="short sequence motif" description="L/FRRG motif" evidence="1">
    <location>
        <begin position="225"/>
        <end position="228"/>
    </location>
</feature>
<feature type="splice variant" id="VSP_016966" description="In isoform 2." evidence="15">
    <original>MEAEAA</original>
    <variation>M</variation>
    <location>
        <begin position="1"/>
        <end position="6"/>
    </location>
</feature>
<feature type="sequence variant" id="VAR_024848" description="In dbSNP:rs883541." evidence="4 5">
    <original>T</original>
    <variation>I</variation>
    <location>
        <position position="31"/>
    </location>
</feature>
<feature type="sequence variant" id="VAR_053439" description="In dbSNP:rs36084378.">
    <original>R</original>
    <variation>H</variation>
    <location>
        <position position="308"/>
    </location>
</feature>
<feature type="mutagenesis site" description="Loss of binding to phosphoinositides and abolishes puncta formation." evidence="11">
    <original>S</original>
    <variation>A</variation>
    <location>
        <position position="203"/>
    </location>
</feature>
<feature type="mutagenesis site" description="Loss of binding to phosphoinositides and abolishes puncta formation." evidence="11">
    <original>S</original>
    <variation>A</variation>
    <location>
        <position position="205"/>
    </location>
</feature>
<feature type="mutagenesis site" description="Loss of binding to phosphoinositides and abolishes puncta formation." evidence="11">
    <original>G</original>
    <variation>A</variation>
    <location>
        <position position="208"/>
    </location>
</feature>
<feature type="mutagenesis site" description="Loss of binding to phosphoinositides and abolishes puncta formation." evidence="11">
    <original>T</original>
    <variation>A</variation>
    <location>
        <position position="209"/>
    </location>
</feature>
<feature type="mutagenesis site" description="Loss of binding to phosphoinositides and abolishes puncta formation." evidence="11">
    <original>R</original>
    <variation>A</variation>
    <location>
        <position position="212"/>
    </location>
</feature>
<feature type="mutagenesis site" description="Loss of binding to phosphoinositides, does not disrupt the MPR pathway." evidence="3">
    <original>RR</original>
    <variation>AA</variation>
    <location>
        <begin position="226"/>
        <end position="227"/>
    </location>
</feature>
<feature type="mutagenesis site" description="Loss of binding to phosphoinositides and abolishes puncta formation." evidence="11">
    <original>R</original>
    <variation>A</variation>
    <location>
        <position position="226"/>
    </location>
</feature>
<feature type="mutagenesis site" description="Loss of binding to phosphoinositides and abolishes puncta formation." evidence="11">
    <original>R</original>
    <variation>A</variation>
    <location>
        <position position="227"/>
    </location>
</feature>
<feature type="mutagenesis site" description="Loss of binding to phosphoinositides and abolishes puncta formation." evidence="11">
    <original>G</original>
    <variation>A</variation>
    <location>
        <position position="228"/>
    </location>
</feature>
<feature type="mutagenesis site" description="Loss of binding to phosphoinositides and abolishes puncta formation." evidence="11">
    <original>S</original>
    <variation>A</variation>
    <location>
        <position position="251"/>
    </location>
</feature>
<feature type="mutagenesis site" description="Loss of binding to phosphoinositides and abolishes puncta formation." evidence="11">
    <original>T</original>
    <variation>A</variation>
    <location>
        <position position="255"/>
    </location>
</feature>
<feature type="mutagenesis site" description="Loss of binding to phosphoinositides and abolishes puncta formation." evidence="11">
    <original>H</original>
    <variation>A</variation>
    <location>
        <position position="257"/>
    </location>
</feature>
<feature type="sequence conflict" description="In Ref. 1; AAV80760." evidence="16" ref="1">
    <original>V</original>
    <variation>A</variation>
    <location>
        <position position="63"/>
    </location>
</feature>
<feature type="sequence conflict" description="In Ref. 1; AAV80760." evidence="16" ref="1">
    <original>A</original>
    <variation>AA</variation>
    <location>
        <position position="249"/>
    </location>
</feature>
<feature type="sequence conflict" description="In Ref. 2; BAA91423." evidence="16" ref="2">
    <original>S</original>
    <variation>R</variation>
    <location>
        <position position="358"/>
    </location>
</feature>
<organism>
    <name type="scientific">Homo sapiens</name>
    <name type="common">Human</name>
    <dbReference type="NCBI Taxonomy" id="9606"/>
    <lineage>
        <taxon>Eukaryota</taxon>
        <taxon>Metazoa</taxon>
        <taxon>Chordata</taxon>
        <taxon>Craniata</taxon>
        <taxon>Vertebrata</taxon>
        <taxon>Euteleostomi</taxon>
        <taxon>Mammalia</taxon>
        <taxon>Eutheria</taxon>
        <taxon>Euarchontoglires</taxon>
        <taxon>Primates</taxon>
        <taxon>Haplorrhini</taxon>
        <taxon>Catarrhini</taxon>
        <taxon>Hominidae</taxon>
        <taxon>Homo</taxon>
    </lineage>
</organism>
<protein>
    <recommendedName>
        <fullName>WD repeat domain phosphoinositide-interacting protein 1</fullName>
        <shortName>WIPI-1</shortName>
    </recommendedName>
    <alternativeName>
        <fullName>Atg18 protein homolog</fullName>
    </alternativeName>
    <alternativeName>
        <fullName>WD40 repeat protein interacting with phosphoinositides of 49 kDa</fullName>
        <shortName>WIPI 49 kDa</shortName>
    </alternativeName>
</protein>
<dbReference type="EMBL" id="AY691424">
    <property type="protein sequence ID" value="AAV80760.1"/>
    <property type="molecule type" value="mRNA"/>
</dbReference>
<dbReference type="EMBL" id="AK000917">
    <property type="protein sequence ID" value="BAA91423.1"/>
    <property type="molecule type" value="mRNA"/>
</dbReference>
<dbReference type="EMBL" id="AC007780">
    <property type="status" value="NOT_ANNOTATED_CDS"/>
    <property type="molecule type" value="Genomic_DNA"/>
</dbReference>
<dbReference type="EMBL" id="BC039867">
    <property type="protein sequence ID" value="AAH39867.1"/>
    <property type="molecule type" value="mRNA"/>
</dbReference>
<dbReference type="CCDS" id="CCDS11677.1">
    <molecule id="Q5MNZ9-1"/>
</dbReference>
<dbReference type="RefSeq" id="NP_001307701.1">
    <property type="nucleotide sequence ID" value="NM_001320772.1"/>
</dbReference>
<dbReference type="RefSeq" id="NP_060453.3">
    <molecule id="Q5MNZ9-1"/>
    <property type="nucleotide sequence ID" value="NM_017983.6"/>
</dbReference>
<dbReference type="SMR" id="Q5MNZ9"/>
<dbReference type="BioGRID" id="120380">
    <property type="interactions" value="54"/>
</dbReference>
<dbReference type="FunCoup" id="Q5MNZ9">
    <property type="interactions" value="1319"/>
</dbReference>
<dbReference type="IntAct" id="Q5MNZ9">
    <property type="interactions" value="28"/>
</dbReference>
<dbReference type="STRING" id="9606.ENSP00000262139"/>
<dbReference type="GlyGen" id="Q5MNZ9">
    <property type="glycosylation" value="6 sites, 1 O-linked glycan (6 sites)"/>
</dbReference>
<dbReference type="iPTMnet" id="Q5MNZ9"/>
<dbReference type="PhosphoSitePlus" id="Q5MNZ9"/>
<dbReference type="BioMuta" id="WIPI1"/>
<dbReference type="DMDM" id="146291100"/>
<dbReference type="jPOST" id="Q5MNZ9"/>
<dbReference type="MassIVE" id="Q5MNZ9"/>
<dbReference type="PaxDb" id="9606-ENSP00000262139"/>
<dbReference type="PeptideAtlas" id="Q5MNZ9"/>
<dbReference type="ProteomicsDB" id="63590">
    <molecule id="Q5MNZ9-1"/>
</dbReference>
<dbReference type="ProteomicsDB" id="63591">
    <molecule id="Q5MNZ9-2"/>
</dbReference>
<dbReference type="Pumba" id="Q5MNZ9"/>
<dbReference type="Antibodypedia" id="1968">
    <property type="antibodies" value="292 antibodies from 36 providers"/>
</dbReference>
<dbReference type="DNASU" id="55062"/>
<dbReference type="Ensembl" id="ENST00000262139.10">
    <molecule id="Q5MNZ9-1"/>
    <property type="protein sequence ID" value="ENSP00000262139.4"/>
    <property type="gene ID" value="ENSG00000070540.13"/>
</dbReference>
<dbReference type="GeneID" id="55062"/>
<dbReference type="KEGG" id="hsa:55062"/>
<dbReference type="MANE-Select" id="ENST00000262139.10">
    <property type="protein sequence ID" value="ENSP00000262139.4"/>
    <property type="RefSeq nucleotide sequence ID" value="NM_017983.7"/>
    <property type="RefSeq protein sequence ID" value="NP_060453.3"/>
</dbReference>
<dbReference type="UCSC" id="uc010dey.4">
    <molecule id="Q5MNZ9-1"/>
    <property type="organism name" value="human"/>
</dbReference>
<dbReference type="AGR" id="HGNC:25471"/>
<dbReference type="CTD" id="55062"/>
<dbReference type="DisGeNET" id="55062"/>
<dbReference type="GeneCards" id="WIPI1"/>
<dbReference type="HGNC" id="HGNC:25471">
    <property type="gene designation" value="WIPI1"/>
</dbReference>
<dbReference type="HPA" id="ENSG00000070540">
    <property type="expression patterns" value="Tissue enhanced (skeletal)"/>
</dbReference>
<dbReference type="MIM" id="609224">
    <property type="type" value="gene"/>
</dbReference>
<dbReference type="neXtProt" id="NX_Q5MNZ9"/>
<dbReference type="OpenTargets" id="ENSG00000070540"/>
<dbReference type="PharmGKB" id="PA142670575"/>
<dbReference type="VEuPathDB" id="HostDB:ENSG00000070540"/>
<dbReference type="eggNOG" id="KOG2110">
    <property type="taxonomic scope" value="Eukaryota"/>
</dbReference>
<dbReference type="GeneTree" id="ENSGT00940000156833"/>
<dbReference type="InParanoid" id="Q5MNZ9"/>
<dbReference type="OMA" id="ATWGGMF"/>
<dbReference type="OrthoDB" id="1667587at2759"/>
<dbReference type="PAN-GO" id="Q5MNZ9">
    <property type="GO annotations" value="9 GO annotations based on evolutionary models"/>
</dbReference>
<dbReference type="PhylomeDB" id="Q5MNZ9"/>
<dbReference type="TreeFam" id="TF314879"/>
<dbReference type="PathwayCommons" id="Q5MNZ9"/>
<dbReference type="Reactome" id="R-HSA-1632852">
    <property type="pathway name" value="Macroautophagy"/>
</dbReference>
<dbReference type="Reactome" id="R-HSA-381038">
    <property type="pathway name" value="XBP1(S) activates chaperone genes"/>
</dbReference>
<dbReference type="SignaLink" id="Q5MNZ9"/>
<dbReference type="SIGNOR" id="Q5MNZ9"/>
<dbReference type="BioGRID-ORCS" id="55062">
    <property type="hits" value="16 hits in 1152 CRISPR screens"/>
</dbReference>
<dbReference type="ChiTaRS" id="WIPI1">
    <property type="organism name" value="human"/>
</dbReference>
<dbReference type="GeneWiki" id="WIPI1"/>
<dbReference type="GenomeRNAi" id="55062"/>
<dbReference type="Pharos" id="Q5MNZ9">
    <property type="development level" value="Tbio"/>
</dbReference>
<dbReference type="PRO" id="PR:Q5MNZ9"/>
<dbReference type="Proteomes" id="UP000005640">
    <property type="component" value="Chromosome 17"/>
</dbReference>
<dbReference type="RNAct" id="Q5MNZ9">
    <property type="molecule type" value="protein"/>
</dbReference>
<dbReference type="Bgee" id="ENSG00000070540">
    <property type="expression patterns" value="Expressed in stromal cell of endometrium and 197 other cell types or tissues"/>
</dbReference>
<dbReference type="ExpressionAtlas" id="Q5MNZ9">
    <property type="expression patterns" value="baseline and differential"/>
</dbReference>
<dbReference type="GO" id="GO:0000421">
    <property type="term" value="C:autophagosome membrane"/>
    <property type="evidence" value="ECO:0000314"/>
    <property type="project" value="UniProtKB"/>
</dbReference>
<dbReference type="GO" id="GO:0030136">
    <property type="term" value="C:clathrin-coated vesicle"/>
    <property type="evidence" value="ECO:0007669"/>
    <property type="project" value="UniProtKB-SubCell"/>
</dbReference>
<dbReference type="GO" id="GO:0005737">
    <property type="term" value="C:cytoplasm"/>
    <property type="evidence" value="ECO:0000314"/>
    <property type="project" value="UniProtKB"/>
</dbReference>
<dbReference type="GO" id="GO:0005856">
    <property type="term" value="C:cytoskeleton"/>
    <property type="evidence" value="ECO:0007669"/>
    <property type="project" value="UniProtKB-SubCell"/>
</dbReference>
<dbReference type="GO" id="GO:0005829">
    <property type="term" value="C:cytosol"/>
    <property type="evidence" value="ECO:0000318"/>
    <property type="project" value="GO_Central"/>
</dbReference>
<dbReference type="GO" id="GO:0010008">
    <property type="term" value="C:endosome membrane"/>
    <property type="evidence" value="ECO:0000314"/>
    <property type="project" value="UniProtKB"/>
</dbReference>
<dbReference type="GO" id="GO:0000139">
    <property type="term" value="C:Golgi membrane"/>
    <property type="evidence" value="ECO:0000304"/>
    <property type="project" value="Reactome"/>
</dbReference>
<dbReference type="GO" id="GO:0000407">
    <property type="term" value="C:phagophore assembly site"/>
    <property type="evidence" value="ECO:0000314"/>
    <property type="project" value="UniProtKB"/>
</dbReference>
<dbReference type="GO" id="GO:0034045">
    <property type="term" value="C:phagophore assembly site membrane"/>
    <property type="evidence" value="ECO:0000314"/>
    <property type="project" value="UniProtKB"/>
</dbReference>
<dbReference type="GO" id="GO:0005802">
    <property type="term" value="C:trans-Golgi network"/>
    <property type="evidence" value="ECO:0000314"/>
    <property type="project" value="UniProtKB"/>
</dbReference>
<dbReference type="GO" id="GO:0050681">
    <property type="term" value="F:nuclear androgen receptor binding"/>
    <property type="evidence" value="ECO:0000314"/>
    <property type="project" value="UniProtKB"/>
</dbReference>
<dbReference type="GO" id="GO:0030331">
    <property type="term" value="F:nuclear estrogen receptor binding"/>
    <property type="evidence" value="ECO:0000314"/>
    <property type="project" value="UniProtKB"/>
</dbReference>
<dbReference type="GO" id="GO:0080025">
    <property type="term" value="F:phosphatidylinositol-3,5-bisphosphate binding"/>
    <property type="evidence" value="ECO:0000314"/>
    <property type="project" value="UniProtKB"/>
</dbReference>
<dbReference type="GO" id="GO:0032266">
    <property type="term" value="F:phosphatidylinositol-3-phosphate binding"/>
    <property type="evidence" value="ECO:0000314"/>
    <property type="project" value="UniProtKB"/>
</dbReference>
<dbReference type="GO" id="GO:0030674">
    <property type="term" value="F:protein-macromolecule adaptor activity"/>
    <property type="evidence" value="ECO:0000314"/>
    <property type="project" value="UniProt"/>
</dbReference>
<dbReference type="GO" id="GO:0005102">
    <property type="term" value="F:signaling receptor binding"/>
    <property type="evidence" value="ECO:0000314"/>
    <property type="project" value="MGI"/>
</dbReference>
<dbReference type="GO" id="GO:0000045">
    <property type="term" value="P:autophagosome assembly"/>
    <property type="evidence" value="ECO:0000315"/>
    <property type="project" value="UniProtKB"/>
</dbReference>
<dbReference type="GO" id="GO:0006914">
    <property type="term" value="P:autophagy"/>
    <property type="evidence" value="ECO:0000270"/>
    <property type="project" value="UniProtKB"/>
</dbReference>
<dbReference type="GO" id="GO:0000422">
    <property type="term" value="P:autophagy of mitochondrion"/>
    <property type="evidence" value="ECO:0000318"/>
    <property type="project" value="GO_Central"/>
</dbReference>
<dbReference type="GO" id="GO:0009267">
    <property type="term" value="P:cellular response to starvation"/>
    <property type="evidence" value="ECO:0000314"/>
    <property type="project" value="UniProtKB"/>
</dbReference>
<dbReference type="GO" id="GO:0061723">
    <property type="term" value="P:glycophagy"/>
    <property type="evidence" value="ECO:0000318"/>
    <property type="project" value="GO_Central"/>
</dbReference>
<dbReference type="GO" id="GO:0044804">
    <property type="term" value="P:nucleophagy"/>
    <property type="evidence" value="ECO:0000318"/>
    <property type="project" value="GO_Central"/>
</dbReference>
<dbReference type="GO" id="GO:0000425">
    <property type="term" value="P:pexophagy"/>
    <property type="evidence" value="ECO:0000318"/>
    <property type="project" value="GO_Central"/>
</dbReference>
<dbReference type="GO" id="GO:2000786">
    <property type="term" value="P:positive regulation of autophagosome assembly"/>
    <property type="evidence" value="ECO:0000314"/>
    <property type="project" value="UniProtKB"/>
</dbReference>
<dbReference type="GO" id="GO:0034497">
    <property type="term" value="P:protein localization to phagophore assembly site"/>
    <property type="evidence" value="ECO:0000318"/>
    <property type="project" value="GO_Central"/>
</dbReference>
<dbReference type="GO" id="GO:0048203">
    <property type="term" value="P:vesicle targeting, trans-Golgi to endosome"/>
    <property type="evidence" value="ECO:0000314"/>
    <property type="project" value="UniProtKB"/>
</dbReference>
<dbReference type="FunFam" id="2.130.10.10:FF:000343">
    <property type="entry name" value="WD repeat domain, phosphoinositide interacting 1"/>
    <property type="match status" value="1"/>
</dbReference>
<dbReference type="Gene3D" id="2.130.10.10">
    <property type="entry name" value="YVTN repeat-like/Quinoprotein amine dehydrogenase"/>
    <property type="match status" value="1"/>
</dbReference>
<dbReference type="InterPro" id="IPR048720">
    <property type="entry name" value="PROPPIN"/>
</dbReference>
<dbReference type="InterPro" id="IPR015943">
    <property type="entry name" value="WD40/YVTN_repeat-like_dom_sf"/>
</dbReference>
<dbReference type="InterPro" id="IPR036322">
    <property type="entry name" value="WD40_repeat_dom_sf"/>
</dbReference>
<dbReference type="InterPro" id="IPR001680">
    <property type="entry name" value="WD40_rpt"/>
</dbReference>
<dbReference type="PANTHER" id="PTHR11227">
    <property type="entry name" value="WD-REPEAT PROTEIN INTERACTING WITH PHOSPHOINOSIDES WIPI -RELATED"/>
    <property type="match status" value="1"/>
</dbReference>
<dbReference type="Pfam" id="PF21032">
    <property type="entry name" value="PROPPIN"/>
    <property type="match status" value="1"/>
</dbReference>
<dbReference type="SMART" id="SM00320">
    <property type="entry name" value="WD40"/>
    <property type="match status" value="2"/>
</dbReference>
<dbReference type="SUPFAM" id="SSF50978">
    <property type="entry name" value="WD40 repeat-like"/>
    <property type="match status" value="1"/>
</dbReference>
<keyword id="KW-0025">Alternative splicing</keyword>
<keyword id="KW-0072">Autophagy</keyword>
<keyword id="KW-0963">Cytoplasm</keyword>
<keyword id="KW-0968">Cytoplasmic vesicle</keyword>
<keyword id="KW-0206">Cytoskeleton</keyword>
<keyword id="KW-0967">Endosome</keyword>
<keyword id="KW-0333">Golgi apparatus</keyword>
<keyword id="KW-0446">Lipid-binding</keyword>
<keyword id="KW-0472">Membrane</keyword>
<keyword id="KW-1267">Proteomics identification</keyword>
<keyword id="KW-1185">Reference proteome</keyword>
<keyword id="KW-0677">Repeat</keyword>
<keyword id="KW-0853">WD repeat</keyword>
<reference key="1">
    <citation type="journal article" date="2004" name="Oncogene">
        <title>WIPI-1alpha (WIPI49), a member of the novel 7-bladed WIPI protein family, is aberrantly expressed in human cancer and is linked to starvation-induced autophagy.</title>
        <authorList>
            <person name="Proikas-Cezanne T."/>
            <person name="Waddell S."/>
            <person name="Gaugel A."/>
            <person name="Frickey T."/>
            <person name="Lupas A."/>
            <person name="Nordheim A."/>
        </authorList>
    </citation>
    <scope>NUCLEOTIDE SEQUENCE [MRNA] (ISOFORM 1)</scope>
    <scope>FUNCTION</scope>
    <scope>TISSUE SPECIFICITY</scope>
    <scope>INTERACTION WITH AR; ESR1 AND ESR2</scope>
    <scope>SUBCELLULAR LOCATION</scope>
    <scope>VARIANT ILE-31</scope>
    <source>
        <tissue>Testis</tissue>
    </source>
</reference>
<reference key="2">
    <citation type="journal article" date="2004" name="Nat. Genet.">
        <title>Complete sequencing and characterization of 21,243 full-length human cDNAs.</title>
        <authorList>
            <person name="Ota T."/>
            <person name="Suzuki Y."/>
            <person name="Nishikawa T."/>
            <person name="Otsuki T."/>
            <person name="Sugiyama T."/>
            <person name="Irie R."/>
            <person name="Wakamatsu A."/>
            <person name="Hayashi K."/>
            <person name="Sato H."/>
            <person name="Nagai K."/>
            <person name="Kimura K."/>
            <person name="Makita H."/>
            <person name="Sekine M."/>
            <person name="Obayashi M."/>
            <person name="Nishi T."/>
            <person name="Shibahara T."/>
            <person name="Tanaka T."/>
            <person name="Ishii S."/>
            <person name="Yamamoto J."/>
            <person name="Saito K."/>
            <person name="Kawai Y."/>
            <person name="Isono Y."/>
            <person name="Nakamura Y."/>
            <person name="Nagahari K."/>
            <person name="Murakami K."/>
            <person name="Yasuda T."/>
            <person name="Iwayanagi T."/>
            <person name="Wagatsuma M."/>
            <person name="Shiratori A."/>
            <person name="Sudo H."/>
            <person name="Hosoiri T."/>
            <person name="Kaku Y."/>
            <person name="Kodaira H."/>
            <person name="Kondo H."/>
            <person name="Sugawara M."/>
            <person name="Takahashi M."/>
            <person name="Kanda K."/>
            <person name="Yokoi T."/>
            <person name="Furuya T."/>
            <person name="Kikkawa E."/>
            <person name="Omura Y."/>
            <person name="Abe K."/>
            <person name="Kamihara K."/>
            <person name="Katsuta N."/>
            <person name="Sato K."/>
            <person name="Tanikawa M."/>
            <person name="Yamazaki M."/>
            <person name="Ninomiya K."/>
            <person name="Ishibashi T."/>
            <person name="Yamashita H."/>
            <person name="Murakawa K."/>
            <person name="Fujimori K."/>
            <person name="Tanai H."/>
            <person name="Kimata M."/>
            <person name="Watanabe M."/>
            <person name="Hiraoka S."/>
            <person name="Chiba Y."/>
            <person name="Ishida S."/>
            <person name="Ono Y."/>
            <person name="Takiguchi S."/>
            <person name="Watanabe S."/>
            <person name="Yosida M."/>
            <person name="Hotuta T."/>
            <person name="Kusano J."/>
            <person name="Kanehori K."/>
            <person name="Takahashi-Fujii A."/>
            <person name="Hara H."/>
            <person name="Tanase T.-O."/>
            <person name="Nomura Y."/>
            <person name="Togiya S."/>
            <person name="Komai F."/>
            <person name="Hara R."/>
            <person name="Takeuchi K."/>
            <person name="Arita M."/>
            <person name="Imose N."/>
            <person name="Musashino K."/>
            <person name="Yuuki H."/>
            <person name="Oshima A."/>
            <person name="Sasaki N."/>
            <person name="Aotsuka S."/>
            <person name="Yoshikawa Y."/>
            <person name="Matsunawa H."/>
            <person name="Ichihara T."/>
            <person name="Shiohata N."/>
            <person name="Sano S."/>
            <person name="Moriya S."/>
            <person name="Momiyama H."/>
            <person name="Satoh N."/>
            <person name="Takami S."/>
            <person name="Terashima Y."/>
            <person name="Suzuki O."/>
            <person name="Nakagawa S."/>
            <person name="Senoh A."/>
            <person name="Mizoguchi H."/>
            <person name="Goto Y."/>
            <person name="Shimizu F."/>
            <person name="Wakebe H."/>
            <person name="Hishigaki H."/>
            <person name="Watanabe T."/>
            <person name="Sugiyama A."/>
            <person name="Takemoto M."/>
            <person name="Kawakami B."/>
            <person name="Yamazaki M."/>
            <person name="Watanabe K."/>
            <person name="Kumagai A."/>
            <person name="Itakura S."/>
            <person name="Fukuzumi Y."/>
            <person name="Fujimori Y."/>
            <person name="Komiyama M."/>
            <person name="Tashiro H."/>
            <person name="Tanigami A."/>
            <person name="Fujiwara T."/>
            <person name="Ono T."/>
            <person name="Yamada K."/>
            <person name="Fujii Y."/>
            <person name="Ozaki K."/>
            <person name="Hirao M."/>
            <person name="Ohmori Y."/>
            <person name="Kawabata A."/>
            <person name="Hikiji T."/>
            <person name="Kobatake N."/>
            <person name="Inagaki H."/>
            <person name="Ikema Y."/>
            <person name="Okamoto S."/>
            <person name="Okitani R."/>
            <person name="Kawakami T."/>
            <person name="Noguchi S."/>
            <person name="Itoh T."/>
            <person name="Shigeta K."/>
            <person name="Senba T."/>
            <person name="Matsumura K."/>
            <person name="Nakajima Y."/>
            <person name="Mizuno T."/>
            <person name="Morinaga M."/>
            <person name="Sasaki M."/>
            <person name="Togashi T."/>
            <person name="Oyama M."/>
            <person name="Hata H."/>
            <person name="Watanabe M."/>
            <person name="Komatsu T."/>
            <person name="Mizushima-Sugano J."/>
            <person name="Satoh T."/>
            <person name="Shirai Y."/>
            <person name="Takahashi Y."/>
            <person name="Nakagawa K."/>
            <person name="Okumura K."/>
            <person name="Nagase T."/>
            <person name="Nomura N."/>
            <person name="Kikuchi H."/>
            <person name="Masuho Y."/>
            <person name="Yamashita R."/>
            <person name="Nakai K."/>
            <person name="Yada T."/>
            <person name="Nakamura Y."/>
            <person name="Ohara O."/>
            <person name="Isogai T."/>
            <person name="Sugano S."/>
        </authorList>
    </citation>
    <scope>NUCLEOTIDE SEQUENCE [LARGE SCALE MRNA] (ISOFORM 2)</scope>
    <source>
        <tissue>Embryo</tissue>
    </source>
</reference>
<reference key="3">
    <citation type="journal article" date="2006" name="Nature">
        <title>DNA sequence of human chromosome 17 and analysis of rearrangement in the human lineage.</title>
        <authorList>
            <person name="Zody M.C."/>
            <person name="Garber M."/>
            <person name="Adams D.J."/>
            <person name="Sharpe T."/>
            <person name="Harrow J."/>
            <person name="Lupski J.R."/>
            <person name="Nicholson C."/>
            <person name="Searle S.M."/>
            <person name="Wilming L."/>
            <person name="Young S.K."/>
            <person name="Abouelleil A."/>
            <person name="Allen N.R."/>
            <person name="Bi W."/>
            <person name="Bloom T."/>
            <person name="Borowsky M.L."/>
            <person name="Bugalter B.E."/>
            <person name="Butler J."/>
            <person name="Chang J.L."/>
            <person name="Chen C.-K."/>
            <person name="Cook A."/>
            <person name="Corum B."/>
            <person name="Cuomo C.A."/>
            <person name="de Jong P.J."/>
            <person name="DeCaprio D."/>
            <person name="Dewar K."/>
            <person name="FitzGerald M."/>
            <person name="Gilbert J."/>
            <person name="Gibson R."/>
            <person name="Gnerre S."/>
            <person name="Goldstein S."/>
            <person name="Grafham D.V."/>
            <person name="Grocock R."/>
            <person name="Hafez N."/>
            <person name="Hagopian D.S."/>
            <person name="Hart E."/>
            <person name="Norman C.H."/>
            <person name="Humphray S."/>
            <person name="Jaffe D.B."/>
            <person name="Jones M."/>
            <person name="Kamal M."/>
            <person name="Khodiyar V.K."/>
            <person name="LaButti K."/>
            <person name="Laird G."/>
            <person name="Lehoczky J."/>
            <person name="Liu X."/>
            <person name="Lokyitsang T."/>
            <person name="Loveland J."/>
            <person name="Lui A."/>
            <person name="Macdonald P."/>
            <person name="Major J.E."/>
            <person name="Matthews L."/>
            <person name="Mauceli E."/>
            <person name="McCarroll S.A."/>
            <person name="Mihalev A.H."/>
            <person name="Mudge J."/>
            <person name="Nguyen C."/>
            <person name="Nicol R."/>
            <person name="O'Leary S.B."/>
            <person name="Osoegawa K."/>
            <person name="Schwartz D.C."/>
            <person name="Shaw-Smith C."/>
            <person name="Stankiewicz P."/>
            <person name="Steward C."/>
            <person name="Swarbreck D."/>
            <person name="Venkataraman V."/>
            <person name="Whittaker C.A."/>
            <person name="Yang X."/>
            <person name="Zimmer A.R."/>
            <person name="Bradley A."/>
            <person name="Hubbard T."/>
            <person name="Birren B.W."/>
            <person name="Rogers J."/>
            <person name="Lander E.S."/>
            <person name="Nusbaum C."/>
        </authorList>
    </citation>
    <scope>NUCLEOTIDE SEQUENCE [LARGE SCALE GENOMIC DNA]</scope>
</reference>
<reference key="4">
    <citation type="journal article" date="2004" name="Genome Res.">
        <title>The status, quality, and expansion of the NIH full-length cDNA project: the Mammalian Gene Collection (MGC).</title>
        <authorList>
            <consortium name="The MGC Project Team"/>
        </authorList>
    </citation>
    <scope>NUCLEOTIDE SEQUENCE [LARGE SCALE MRNA] (ISOFORM 1)</scope>
    <scope>VARIANT ILE-31</scope>
    <source>
        <tissue>Skin</tissue>
    </source>
</reference>
<reference key="5">
    <citation type="journal article" date="2004" name="Mol. Biol. Cell">
        <title>PtdIns-specific MPR pathway association of a novel WD40 repeat protein, WIPI49.</title>
        <authorList>
            <person name="Jeffries T.R."/>
            <person name="Dove S.K."/>
            <person name="Michell R.H."/>
            <person name="Parker P.J."/>
        </authorList>
    </citation>
    <scope>IDENTIFICATION</scope>
    <scope>FUNCTION</scope>
    <scope>SUBCELLULAR LOCATION</scope>
    <scope>BINDING TO PHOSPHOINOSITIDES</scope>
    <scope>MUTAGENESIS OF 226-ARG-ARG-227</scope>
</reference>
<reference key="6">
    <citation type="journal article" date="2007" name="FEBS Lett.">
        <title>Human WIPI-1 puncta-formation: a novel assay to assess mammalian autophagy.</title>
        <authorList>
            <person name="Proikas-Cezanne T."/>
            <person name="Ruckerbauer S."/>
            <person name="Stierhof Y.D."/>
            <person name="Berg C."/>
            <person name="Nordheim A."/>
        </authorList>
    </citation>
    <scope>SUBCELLULAR LOCATION</scope>
</reference>
<reference key="7">
    <citation type="journal article" date="2009" name="EMBO J.">
        <title>Control of autophagy initiation by phosphoinositide 3-phosphatase Jumpy.</title>
        <authorList>
            <person name="Vergne I."/>
            <person name="Roberts E."/>
            <person name="Elmaoued R.A."/>
            <person name="Tosch V."/>
            <person name="Delgado M.A."/>
            <person name="Proikas-Cezanne T."/>
            <person name="Laporte J."/>
            <person name="Deretic V."/>
        </authorList>
    </citation>
    <scope>SUBCELLULAR LOCATION</scope>
</reference>
<reference key="8">
    <citation type="journal article" date="2010" name="Autophagy">
        <title>Characterization of autophagosome formation site by a hierarchical analysis of mammalian Atg proteins.</title>
        <authorList>
            <person name="Itakura E."/>
            <person name="Mizushima N."/>
        </authorList>
    </citation>
    <scope>FUNCTION</scope>
    <scope>SUBCELLULAR LOCATION</scope>
</reference>
<reference key="9">
    <citation type="journal article" date="2010" name="Cell. Signal.">
        <title>AMPK-independent induction of autophagy by cytosolic Ca2+ increase.</title>
        <authorList>
            <person name="Grotemeier A."/>
            <person name="Alers S."/>
            <person name="Pfisterer S.G."/>
            <person name="Paasch F."/>
            <person name="Daubrawa M."/>
            <person name="Dieterle A."/>
            <person name="Viollet B."/>
            <person name="Wesselborg S."/>
            <person name="Proikas-Cezanne T."/>
            <person name="Stork B."/>
        </authorList>
    </citation>
    <scope>FUNCTION</scope>
    <scope>SUBCELLULAR LOCATION</scope>
</reference>
<reference key="10">
    <citation type="journal article" date="2010" name="J. Biol. Chem.">
        <title>Starvation-induced hyperacetylation of tubulin is required for the stimulation of autophagy by nutrient deprivation.</title>
        <authorList>
            <person name="Geeraert C."/>
            <person name="Ratier A."/>
            <person name="Pfisterer S.G."/>
            <person name="Perdiz D."/>
            <person name="Cantaloube I."/>
            <person name="Rouault A."/>
            <person name="Pattingre S."/>
            <person name="Proikas-Cezanne T."/>
            <person name="Codogno P."/>
            <person name="Pous C."/>
        </authorList>
    </citation>
    <scope>FUNCTION</scope>
    <scope>SUBCELLULAR LOCATION</scope>
    <scope>MICROTUBULE-BINDING</scope>
</reference>
<reference key="11">
    <citation type="journal article" date="2010" name="J. Biol. Chem.">
        <title>The Bcl-2 homology domain 3 mimetic gossypol induces both Beclin 1-dependent and Beclin 1-independent cytoprotective autophagy in cancer cells.</title>
        <authorList>
            <person name="Gao P."/>
            <person name="Bauvy C."/>
            <person name="Souquere S."/>
            <person name="Tonelli G."/>
            <person name="Liu L."/>
            <person name="Zhu Y."/>
            <person name="Qiao Z."/>
            <person name="Bakula D."/>
            <person name="Proikas-Cezanne T."/>
            <person name="Pierron G."/>
            <person name="Codogno P."/>
            <person name="Chen Q."/>
            <person name="Mehrpour M."/>
        </authorList>
    </citation>
    <scope>SUBCELLULAR LOCATION</scope>
</reference>
<reference key="12">
    <citation type="journal article" date="2010" name="Traffic">
        <title>Modulation of local PtdIns3P levels by the PI phosphatase MTMR3 regulates constitutive autophagy.</title>
        <authorList>
            <person name="Taguchi-Atarashi N."/>
            <person name="Hamasaki M."/>
            <person name="Matsunaga K."/>
            <person name="Omori H."/>
            <person name="Ktistakis N.T."/>
            <person name="Yoshimori T."/>
            <person name="Noda T."/>
        </authorList>
    </citation>
    <scope>SUBCELLULAR LOCATION</scope>
</reference>
<reference key="13">
    <citation type="journal article" date="2011" name="J. Biol. Chem.">
        <title>WIPI1 coordinates melanogenic gene transcription and melanosome formation via TORC1 inhibition.</title>
        <authorList>
            <person name="Ho H."/>
            <person name="Kapadia R."/>
            <person name="Al-Tahan S."/>
            <person name="Ahmad S."/>
            <person name="Ganesan A.K."/>
        </authorList>
    </citation>
    <scope>FUNCTION</scope>
</reference>
<reference key="14">
    <citation type="journal article" date="2011" name="J. Cell. Mol. Med.">
        <title>Freeze-fracture replica immunolabelling reveals human WIPI-1 and WIPI-2 as membrane proteins of autophagosomes.</title>
        <authorList>
            <person name="Proikas-Cezanne T."/>
            <person name="Robenek H."/>
        </authorList>
    </citation>
    <scope>SUBCELLULAR LOCATION</scope>
</reference>
<reference key="15">
    <citation type="journal article" date="2011" name="Mol. Pharmacol.">
        <title>Ca2+/calmodulin-dependent kinase (CaMK) signaling via CaMKI and AMP-activated protein kinase contributes to the regulation of WIPI-1 at the onset of autophagy.</title>
        <authorList>
            <person name="Pfisterer S.G."/>
            <person name="Mauthe M."/>
            <person name="Codogno P."/>
            <person name="Proikas-Cezanne T."/>
        </authorList>
    </citation>
    <scope>REGULATION BY CALCIUM-SIGNALING</scope>
    <scope>SUBCELLULAR LOCATION</scope>
</reference>
<reference key="16">
    <citation type="journal article" date="2012" name="Int. J. Cell Biol.">
        <title>WIPI-1 positive autophagosome-like vesicles entrap pathogenic Staphylococcus aureus for lysosomal degradation.</title>
        <authorList>
            <person name="Mauthe M."/>
            <person name="Yu W."/>
            <person name="Krut O."/>
            <person name="Kronke M."/>
            <person name="Gotz F."/>
            <person name="Robenek H."/>
            <person name="Proikas-Cezanne T."/>
        </authorList>
    </citation>
    <scope>FUNCTION</scope>
</reference>
<reference key="17">
    <citation type="journal article" date="2012" name="J. Mol. Signal.">
        <title>Defining regulatory and phosphoinositide-binding sites in the human WIPI-1 beta-propeller responsible for autophagosomal membrane localization downstream of mTORC1 inhibition.</title>
        <authorList>
            <person name="Gaugel A."/>
            <person name="Bakula D."/>
            <person name="Hoffmann A."/>
            <person name="Proikas-Cezanne T."/>
        </authorList>
    </citation>
    <scope>FUNCTION</scope>
    <scope>DOMAIN</scope>
    <scope>PIP2-BINDING</scope>
    <scope>MUTAGENESIS OF SER-203; SER-205; GLY-208; THR-209; ARG-212; ARG-226; ARG-227; GLY-228; SER-251; THR-255 AND HIS-257</scope>
</reference>
<reference key="18">
    <citation type="journal article" date="2017" name="Nat. Commun.">
        <title>WIPI3 and WIPI4 beta-propellers are scaffolds for LKB1-AMPK-TSC signalling circuits in the control of autophagy.</title>
        <authorList>
            <person name="Bakula D."/>
            <person name="Mueller A.J."/>
            <person name="Zuleger T."/>
            <person name="Takacs Z."/>
            <person name="Franz-Wachtel M."/>
            <person name="Thost A.K."/>
            <person name="Brigger D."/>
            <person name="Tschan M.P."/>
            <person name="Frickey T."/>
            <person name="Robenek H."/>
            <person name="Macek B."/>
            <person name="Proikas-Cezanne T."/>
        </authorList>
    </citation>
    <scope>FUNCTION</scope>
    <scope>PHOSPHOINOSITIDES-BINDING</scope>
    <scope>INTERACTION WITH ATG16L1; NUDC; WIPI2 AND WDR45</scope>
    <scope>SUBCELLULAR LOCATION</scope>
</reference>
<reference key="19">
    <citation type="journal article" date="2019" name="Elife">
        <title>The autophagic membrane tether ATG2A transfers lipids between membranes.</title>
        <authorList>
            <person name="Maeda S."/>
            <person name="Otomo C."/>
            <person name="Otomo T."/>
        </authorList>
    </citation>
    <scope>FUNCTION</scope>
</reference>
<reference key="20">
    <citation type="journal article" date="2021" name="Autophagy">
        <title>Mammalian BCAS3 and C16orf70 associate with the phagophore assembly site in response to selective and non-selective autophagy.</title>
        <authorList>
            <person name="Kojima W."/>
            <person name="Yamano K."/>
            <person name="Kosako H."/>
            <person name="Imai K."/>
            <person name="Kikuchi R."/>
            <person name="Tanaka K."/>
            <person name="Matsuda N."/>
        </authorList>
    </citation>
    <scope>SUBCELLULAR LOCATION</scope>
    <scope>PHOSPHOINOSITIDES-BINDING</scope>
</reference>
<name>WIPI1_HUMAN</name>
<evidence type="ECO:0000250" key="1">
    <source>
        <dbReference type="UniProtKB" id="Q9Y4P8"/>
    </source>
</evidence>
<evidence type="ECO:0000256" key="2">
    <source>
        <dbReference type="SAM" id="MobiDB-lite"/>
    </source>
</evidence>
<evidence type="ECO:0000269" key="3">
    <source>
    </source>
</evidence>
<evidence type="ECO:0000269" key="4">
    <source>
    </source>
</evidence>
<evidence type="ECO:0000269" key="5">
    <source>
    </source>
</evidence>
<evidence type="ECO:0000269" key="6">
    <source>
    </source>
</evidence>
<evidence type="ECO:0000269" key="7">
    <source>
    </source>
</evidence>
<evidence type="ECO:0000269" key="8">
    <source>
    </source>
</evidence>
<evidence type="ECO:0000269" key="9">
    <source>
    </source>
</evidence>
<evidence type="ECO:0000269" key="10">
    <source>
    </source>
</evidence>
<evidence type="ECO:0000269" key="11">
    <source>
    </source>
</evidence>
<evidence type="ECO:0000269" key="12">
    <source>
    </source>
</evidence>
<evidence type="ECO:0000269" key="13">
    <source>
    </source>
</evidence>
<evidence type="ECO:0000269" key="14">
    <source>
    </source>
</evidence>
<evidence type="ECO:0000303" key="15">
    <source>
    </source>
</evidence>
<evidence type="ECO:0000305" key="16"/>
<comment type="function">
    <text evidence="3 5 6 7 8 9 10 11 12 13 14">Component of the autophagy machinery that controls the major intracellular degradation process by which cytoplasmic materials are packaged into autophagosomes and delivered to lysosomes for degradation (PubMed:15602573, PubMed:20114074, PubMed:20484055, PubMed:20639694, PubMed:23088497, PubMed:28561066, PubMed:31271352). Plays an important role in starvation- and calcium-mediated autophagy, as well as in mitophagy (PubMed:28561066). Functions downstream of the ULK1 and PI3-kinases that produce phosphatidylinositol 3-phosphate (PtdIns3P) on membranes of the endoplasmic reticulum once activated (PubMed:28561066). Binds phosphatidylinositol 3-phosphate (PtdIns3P), and maybe other phosphoinositides including PtdIns3,5P2 and PtdIns5P, and is recruited to phagophore assembly sites at the endoplasmic reticulum membranes (PubMed:28561066, PubMed:31271352, PubMed:33499712). There, it assists WIPI2 in the recruitment of ATG12-ATG5-ATG16L1, a complex that directly controls the elongation of the nascent autophagosomal membrane (PubMed:28561066). Together with WDR45/WIPI4, promotes ATG2 (ATG2A or ATG2B)-mediated lipid transfer by enhancing ATG2-association with phosphatidylinositol 3-monophosphate (PI3P)-containing membranes (PubMed:31271352). Involved in xenophagy of Staphylococcus aureus (PubMed:22829830). Invading S.aureus cells become entrapped in autophagosome-like WIPI1 positive vesicles targeted for lysosomal degradation (PubMed:22829830). Also plays a distinct role in controlling the transcription of melanogenic enzymes and melanosome maturation, a process that is distinct from starvation-induced autophagy (PubMed:21317285). May also regulate the trafficking of proteins involved in the mannose-6-phosphate receptor (MPR) recycling pathway (PubMed:15020712).</text>
</comment>
<comment type="subunit">
    <text evidence="5 12">Interacts with androgen receptor (AR) and the estrogen receptors ESR1 and ESR2 (PubMed:15602573). Interacts with WIPI2 (PubMed:28561066). Interacts with WDR45 (PubMed:28561066). Interacts with ATG16L1 (PubMed:28561066). May interact with NUDC (PubMed:28561066).</text>
</comment>
<comment type="subcellular location">
    <subcellularLocation>
        <location>Golgi apparatus</location>
        <location>trans-Golgi network</location>
    </subcellularLocation>
    <subcellularLocation>
        <location>Endosome</location>
    </subcellularLocation>
    <subcellularLocation>
        <location>Cytoplasmic vesicle</location>
        <location>Clathrin-coated vesicle</location>
    </subcellularLocation>
    <subcellularLocation>
        <location evidence="12 14">Preautophagosomal structure membrane</location>
        <topology>Peripheral membrane protein</topology>
    </subcellularLocation>
    <subcellularLocation>
        <location>Cytoplasm</location>
        <location>Cytoskeleton</location>
    </subcellularLocation>
    <text>Trans elements of the Golgi and peripheral endosomes. Dynamically cycles through these compartments and is susceptible to conditions that modulate membrane flux. Enriched in clathrin-coated vesicles. Upon starvation-induced autophagy, accumulates at subcellular structures in the cytoplasm: enlarged vesicular and lasso-like structures, and large cup-shaped structures predominantly around the nucleus. Recruitment to autophagic membranes is controlled by MTMR14. Labile microtubules specifically recruit markers of autophagosome formation like WIPI1, whereas mature autophagosomes may bind to stable microtubules.</text>
</comment>
<comment type="alternative products">
    <event type="alternative splicing"/>
    <isoform>
        <id>Q5MNZ9-1</id>
        <name>1</name>
        <name>WIPI-1 alpha</name>
        <sequence type="displayed"/>
    </isoform>
    <isoform>
        <id>Q5MNZ9-2</id>
        <name>2</name>
        <name>WIPI-1 beta</name>
        <sequence type="described" ref="VSP_016966"/>
    </isoform>
</comment>
<comment type="tissue specificity">
    <text evidence="5">Ubiquitously expressed. Highly expressed in skeletal muscle, heart, testis, pancreas and placenta. Highly expressed in G361, Sk-mel-28, Sk-mel-13, WM852 and WM451 cells. Up-regulated in a variety of tumor tissues.</text>
</comment>
<comment type="domain">
    <text evidence="11">The N-terminus might form a beta-propeller domain involved in specific binding to phosphatidylinositol 3,5-bisphosphate (PIP2), leading to the association of the protein to the membrane. Association to the membrane can also occur through binding to phosphatidylinositol 3-monophosphate (PI3P).</text>
</comment>
<comment type="domain">
    <text evidence="1">The L/FRRG motif is required for recruitment to PtdIns3P.</text>
</comment>
<comment type="similarity">
    <text evidence="16">Belongs to the WD repeat PROPPIN family.</text>
</comment>
<proteinExistence type="evidence at protein level"/>
<gene>
    <name type="primary">WIPI1</name>
    <name type="synonym">WIPI49</name>
</gene>
<sequence>MEAEAADAPPGGVESALSCFSFNQDCTSLATGTKAGYKLFSLSSVEQLDQVHGSNEIPDVYIVERLFSSSLVVVVSHTKPRQMNVYHFKKGTEICNYSYSSNILSIRLNRQRLLVCLEESIYIHNIKDMKLLKTLLDIPANPTGLCALSINHSNSYLAYPGSLTSGEIVLYDGNSLKTVCTIAAHEGTLAAITFNASGSKLASASEKGTVIRVFSVPDGQKLYEFRRGMKRYVTISSLVFSMDSQFLCASSNTETVHIFKLEQVTNSRPEEPSTWSGYMGKMFMAATNYLPTQVSDMMHQDRAFATARLNFSGQRNICTLSTIQKLPRLLVASSSGHLYMYNLDPQDGGECVLIKTHSLLGSGTTEENKENDLRPSLPQSYAATVARPSASSASTVPGYSEDGGALRGEVIPEHEFATGPVCLDDENEFPPIILCRGNQKGKTKQS</sequence>
<accession>Q5MNZ9</accession>
<accession>Q8IXM5</accession>
<accession>Q9NWF8</accession>